<keyword id="KW-0119">Carbohydrate metabolism</keyword>
<keyword id="KW-0963">Cytoplasm</keyword>
<keyword id="KW-0378">Hydrolase</keyword>
<keyword id="KW-0460">Magnesium</keyword>
<keyword id="KW-0479">Metal-binding</keyword>
<keyword id="KW-1185">Reference proteome</keyword>
<comment type="catalytic activity">
    <reaction evidence="1">
        <text>beta-D-fructose 1,6-bisphosphate + H2O = beta-D-fructose 6-phosphate + phosphate</text>
        <dbReference type="Rhea" id="RHEA:11064"/>
        <dbReference type="ChEBI" id="CHEBI:15377"/>
        <dbReference type="ChEBI" id="CHEBI:32966"/>
        <dbReference type="ChEBI" id="CHEBI:43474"/>
        <dbReference type="ChEBI" id="CHEBI:57634"/>
        <dbReference type="EC" id="3.1.3.11"/>
    </reaction>
</comment>
<comment type="cofactor">
    <cofactor evidence="1">
        <name>Mg(2+)</name>
        <dbReference type="ChEBI" id="CHEBI:18420"/>
    </cofactor>
    <text evidence="1">Binds 2 magnesium ions per subunit.</text>
</comment>
<comment type="pathway">
    <text evidence="1">Carbohydrate biosynthesis; gluconeogenesis.</text>
</comment>
<comment type="subunit">
    <text evidence="1">Homotetramer.</text>
</comment>
<comment type="subcellular location">
    <subcellularLocation>
        <location evidence="1">Cytoplasm</location>
    </subcellularLocation>
</comment>
<comment type="similarity">
    <text evidence="1">Belongs to the FBPase class 1 family.</text>
</comment>
<organism>
    <name type="scientific">Methanospirillum hungatei JF-1 (strain ATCC 27890 / DSM 864 / NBRC 100397 / JF-1)</name>
    <dbReference type="NCBI Taxonomy" id="323259"/>
    <lineage>
        <taxon>Archaea</taxon>
        <taxon>Methanobacteriati</taxon>
        <taxon>Methanobacteriota</taxon>
        <taxon>Stenosarchaea group</taxon>
        <taxon>Methanomicrobia</taxon>
        <taxon>Methanomicrobiales</taxon>
        <taxon>Methanospirillaceae</taxon>
        <taxon>Methanospirillum</taxon>
    </lineage>
</organism>
<dbReference type="EC" id="3.1.3.11" evidence="1"/>
<dbReference type="EMBL" id="CP000254">
    <property type="protein sequence ID" value="ABD40953.1"/>
    <property type="molecule type" value="Genomic_DNA"/>
</dbReference>
<dbReference type="SMR" id="Q2FM20"/>
<dbReference type="STRING" id="323259.Mhun_1206"/>
<dbReference type="EnsemblBacteria" id="ABD40953">
    <property type="protein sequence ID" value="ABD40953"/>
    <property type="gene ID" value="Mhun_1206"/>
</dbReference>
<dbReference type="KEGG" id="mhu:Mhun_1206"/>
<dbReference type="eggNOG" id="arCOG04603">
    <property type="taxonomic scope" value="Archaea"/>
</dbReference>
<dbReference type="HOGENOM" id="CLU_039977_2_2_2"/>
<dbReference type="InParanoid" id="Q2FM20"/>
<dbReference type="OrthoDB" id="146513at2157"/>
<dbReference type="UniPathway" id="UPA00138"/>
<dbReference type="Proteomes" id="UP000001941">
    <property type="component" value="Chromosome"/>
</dbReference>
<dbReference type="GO" id="GO:0005737">
    <property type="term" value="C:cytoplasm"/>
    <property type="evidence" value="ECO:0007669"/>
    <property type="project" value="UniProtKB-SubCell"/>
</dbReference>
<dbReference type="GO" id="GO:0042132">
    <property type="term" value="F:fructose 1,6-bisphosphate 1-phosphatase activity"/>
    <property type="evidence" value="ECO:0007669"/>
    <property type="project" value="UniProtKB-UniRule"/>
</dbReference>
<dbReference type="GO" id="GO:0000287">
    <property type="term" value="F:magnesium ion binding"/>
    <property type="evidence" value="ECO:0007669"/>
    <property type="project" value="UniProtKB-UniRule"/>
</dbReference>
<dbReference type="GO" id="GO:0030388">
    <property type="term" value="P:fructose 1,6-bisphosphate metabolic process"/>
    <property type="evidence" value="ECO:0007669"/>
    <property type="project" value="TreeGrafter"/>
</dbReference>
<dbReference type="GO" id="GO:0006002">
    <property type="term" value="P:fructose 6-phosphate metabolic process"/>
    <property type="evidence" value="ECO:0007669"/>
    <property type="project" value="TreeGrafter"/>
</dbReference>
<dbReference type="GO" id="GO:0006000">
    <property type="term" value="P:fructose metabolic process"/>
    <property type="evidence" value="ECO:0007669"/>
    <property type="project" value="TreeGrafter"/>
</dbReference>
<dbReference type="GO" id="GO:0006094">
    <property type="term" value="P:gluconeogenesis"/>
    <property type="evidence" value="ECO:0007669"/>
    <property type="project" value="UniProtKB-UniRule"/>
</dbReference>
<dbReference type="GO" id="GO:0005986">
    <property type="term" value="P:sucrose biosynthetic process"/>
    <property type="evidence" value="ECO:0007669"/>
    <property type="project" value="TreeGrafter"/>
</dbReference>
<dbReference type="CDD" id="cd00354">
    <property type="entry name" value="FBPase"/>
    <property type="match status" value="1"/>
</dbReference>
<dbReference type="Gene3D" id="3.40.190.80">
    <property type="match status" value="1"/>
</dbReference>
<dbReference type="Gene3D" id="3.30.540.10">
    <property type="entry name" value="Fructose-1,6-Bisphosphatase, subunit A, domain 1"/>
    <property type="match status" value="1"/>
</dbReference>
<dbReference type="HAMAP" id="MF_01855">
    <property type="entry name" value="FBPase_class1"/>
    <property type="match status" value="1"/>
</dbReference>
<dbReference type="InterPro" id="IPR044015">
    <property type="entry name" value="FBPase_C_dom"/>
</dbReference>
<dbReference type="InterPro" id="IPR000146">
    <property type="entry name" value="FBPase_class-1"/>
</dbReference>
<dbReference type="InterPro" id="IPR033391">
    <property type="entry name" value="FBPase_N"/>
</dbReference>
<dbReference type="InterPro" id="IPR028343">
    <property type="entry name" value="FBPtase"/>
</dbReference>
<dbReference type="PANTHER" id="PTHR11556">
    <property type="entry name" value="FRUCTOSE-1,6-BISPHOSPHATASE-RELATED"/>
    <property type="match status" value="1"/>
</dbReference>
<dbReference type="PANTHER" id="PTHR11556:SF35">
    <property type="entry name" value="SEDOHEPTULOSE-1,7-BISPHOSPHATASE, CHLOROPLASTIC"/>
    <property type="match status" value="1"/>
</dbReference>
<dbReference type="Pfam" id="PF00316">
    <property type="entry name" value="FBPase"/>
    <property type="match status" value="1"/>
</dbReference>
<dbReference type="Pfam" id="PF18913">
    <property type="entry name" value="FBPase_C"/>
    <property type="match status" value="1"/>
</dbReference>
<dbReference type="PIRSF" id="PIRSF500210">
    <property type="entry name" value="FBPtase"/>
    <property type="match status" value="1"/>
</dbReference>
<dbReference type="PIRSF" id="PIRSF000904">
    <property type="entry name" value="FBPtase_SBPase"/>
    <property type="match status" value="1"/>
</dbReference>
<dbReference type="PRINTS" id="PR00115">
    <property type="entry name" value="F16BPHPHTASE"/>
</dbReference>
<dbReference type="SUPFAM" id="SSF56655">
    <property type="entry name" value="Carbohydrate phosphatase"/>
    <property type="match status" value="1"/>
</dbReference>
<proteinExistence type="inferred from homology"/>
<protein>
    <recommendedName>
        <fullName evidence="1">Fructose-1,6-bisphosphatase class 1</fullName>
        <shortName evidence="1">FBPase class 1</shortName>
        <ecNumber evidence="1">3.1.3.11</ecNumber>
    </recommendedName>
    <alternativeName>
        <fullName evidence="1">D-fructose-1,6-bisphosphate 1-phosphohydrolase class 1</fullName>
    </alternativeName>
</protein>
<accession>Q2FM20</accession>
<gene>
    <name evidence="1" type="primary">fbp</name>
    <name type="ordered locus">Mhun_1206</name>
</gene>
<sequence length="311" mass="35024">MKYADISLRLYMVFLRKYLESCGCEPDLIALIRLISRQMDPIRKAFLDNQMYEHTLNASGELQAQMDTWADEHLIKVVGESGLVRELASEEQADIIRFENSRCEYCMVMDPLDGSSLISTNLAVGTIVGIYENGGVLQPGSKLRAAFYTLFGPLTVLVVSVGKGVQSFAWDPESEHYLLLKDHFSVPEGKQYGTGGVRNEWLLPHLKVIEYFDQNGFKIRYSGSFVADCHQLLVYGGIYTYPGSEKSPNGKFRLLFEANPLGFIITQAGGRITDGRRNILNIVPEKHHQKTPVYIGSKGIIEKIEEIYKNL</sequence>
<feature type="chain" id="PRO_0000364775" description="Fructose-1,6-bisphosphatase class 1">
    <location>
        <begin position="1"/>
        <end position="311"/>
    </location>
</feature>
<feature type="binding site" evidence="1">
    <location>
        <position position="90"/>
    </location>
    <ligand>
        <name>Mg(2+)</name>
        <dbReference type="ChEBI" id="CHEBI:18420"/>
        <label>1</label>
    </ligand>
</feature>
<feature type="binding site" evidence="1">
    <location>
        <position position="110"/>
    </location>
    <ligand>
        <name>Mg(2+)</name>
        <dbReference type="ChEBI" id="CHEBI:18420"/>
        <label>1</label>
    </ligand>
</feature>
<feature type="binding site" evidence="1">
    <location>
        <position position="110"/>
    </location>
    <ligand>
        <name>Mg(2+)</name>
        <dbReference type="ChEBI" id="CHEBI:18420"/>
        <label>2</label>
    </ligand>
</feature>
<feature type="binding site" evidence="1">
    <location>
        <position position="112"/>
    </location>
    <ligand>
        <name>Mg(2+)</name>
        <dbReference type="ChEBI" id="CHEBI:18420"/>
        <label>1</label>
    </ligand>
</feature>
<feature type="binding site" evidence="1">
    <location>
        <begin position="113"/>
        <end position="116"/>
    </location>
    <ligand>
        <name>substrate</name>
    </ligand>
</feature>
<feature type="binding site" evidence="1">
    <location>
        <position position="113"/>
    </location>
    <ligand>
        <name>Mg(2+)</name>
        <dbReference type="ChEBI" id="CHEBI:18420"/>
        <label>2</label>
    </ligand>
</feature>
<feature type="binding site" evidence="1">
    <location>
        <position position="221"/>
    </location>
    <ligand>
        <name>substrate</name>
    </ligand>
</feature>
<feature type="binding site" evidence="1">
    <location>
        <position position="251"/>
    </location>
    <ligand>
        <name>substrate</name>
    </ligand>
</feature>
<feature type="binding site" evidence="1">
    <location>
        <position position="257"/>
    </location>
    <ligand>
        <name>Mg(2+)</name>
        <dbReference type="ChEBI" id="CHEBI:18420"/>
        <label>2</label>
    </ligand>
</feature>
<reference key="1">
    <citation type="journal article" date="2016" name="Stand. Genomic Sci.">
        <title>Complete genome sequence of Methanospirillum hungatei type strain JF1.</title>
        <authorList>
            <person name="Gunsalus R.P."/>
            <person name="Cook L.E."/>
            <person name="Crable B."/>
            <person name="Rohlin L."/>
            <person name="McDonald E."/>
            <person name="Mouttaki H."/>
            <person name="Sieber J.R."/>
            <person name="Poweleit N."/>
            <person name="Zhou H."/>
            <person name="Lapidus A.L."/>
            <person name="Daligault H.E."/>
            <person name="Land M."/>
            <person name="Gilna P."/>
            <person name="Ivanova N."/>
            <person name="Kyrpides N."/>
            <person name="Culley D.E."/>
            <person name="McInerney M.J."/>
        </authorList>
    </citation>
    <scope>NUCLEOTIDE SEQUENCE [LARGE SCALE GENOMIC DNA]</scope>
    <source>
        <strain>ATCC 27890 / DSM 864 / NBRC 100397 / JF-1</strain>
    </source>
</reference>
<name>F16PA_METHJ</name>
<evidence type="ECO:0000255" key="1">
    <source>
        <dbReference type="HAMAP-Rule" id="MF_01855"/>
    </source>
</evidence>